<reference key="1">
    <citation type="journal article" date="2000" name="Mol. Gen. Genet.">
        <title>Complete nucleotide sequence of the Oenothera elata plastid chromosome, representing plastome I of the five distinguishable Euoenothera plastomes.</title>
        <authorList>
            <person name="Hupfer H."/>
            <person name="Swiatek M."/>
            <person name="Hornung S."/>
            <person name="Herrmann R.G."/>
            <person name="Maier R.M."/>
            <person name="Chiu W.-L."/>
            <person name="Sears B."/>
        </authorList>
    </citation>
    <scope>NUCLEOTIDE SEQUENCE [LARGE SCALE GENOMIC DNA]</scope>
    <source>
        <strain>cv. Johansen</strain>
    </source>
</reference>
<sequence length="130" mass="15853">MTRIRRGYIARRRRTKTRFFASSWRGARGNLTRAIIQQRIRAWFSSHRDRTRQKRDFRRLWITRINAAIRENGRSSIYSKLIHNLYKRQLFLNRKMLAQLAILNRNCLYMISNQILKEVDWQESATILEI</sequence>
<geneLocation type="chloroplast"/>
<evidence type="ECO:0000255" key="1">
    <source>
        <dbReference type="HAMAP-Rule" id="MF_00382"/>
    </source>
</evidence>
<evidence type="ECO:0000305" key="2"/>
<comment type="function">
    <text evidence="1">Binds directly to 23S ribosomal RNA and is necessary for the in vitro assembly process of the 50S ribosomal subunit. It is not involved in the protein synthesizing functions of that subunit.</text>
</comment>
<comment type="subcellular location">
    <subcellularLocation>
        <location>Plastid</location>
        <location>Chloroplast</location>
    </subcellularLocation>
</comment>
<comment type="similarity">
    <text evidence="1">Belongs to the bacterial ribosomal protein bL20 family.</text>
</comment>
<keyword id="KW-0150">Chloroplast</keyword>
<keyword id="KW-0934">Plastid</keyword>
<keyword id="KW-0687">Ribonucleoprotein</keyword>
<keyword id="KW-0689">Ribosomal protein</keyword>
<keyword id="KW-0694">RNA-binding</keyword>
<keyword id="KW-0699">rRNA-binding</keyword>
<organism>
    <name type="scientific">Oenothera elata subsp. hookeri</name>
    <name type="common">Hooker's evening primrose</name>
    <name type="synonym">Oenothera hookeri</name>
    <dbReference type="NCBI Taxonomy" id="85636"/>
    <lineage>
        <taxon>Eukaryota</taxon>
        <taxon>Viridiplantae</taxon>
        <taxon>Streptophyta</taxon>
        <taxon>Embryophyta</taxon>
        <taxon>Tracheophyta</taxon>
        <taxon>Spermatophyta</taxon>
        <taxon>Magnoliopsida</taxon>
        <taxon>eudicotyledons</taxon>
        <taxon>Gunneridae</taxon>
        <taxon>Pentapetalae</taxon>
        <taxon>rosids</taxon>
        <taxon>malvids</taxon>
        <taxon>Myrtales</taxon>
        <taxon>Onagraceae</taxon>
        <taxon>Onagroideae</taxon>
        <taxon>Onagreae</taxon>
        <taxon>Oenothera</taxon>
    </lineage>
</organism>
<dbReference type="EMBL" id="AJ271079">
    <property type="protein sequence ID" value="CAB67180.1"/>
    <property type="molecule type" value="Genomic_DNA"/>
</dbReference>
<dbReference type="RefSeq" id="NP_084715.1">
    <property type="nucleotide sequence ID" value="NC_002693.2"/>
</dbReference>
<dbReference type="SMR" id="Q9MTK0"/>
<dbReference type="GeneID" id="802816"/>
<dbReference type="GO" id="GO:0009507">
    <property type="term" value="C:chloroplast"/>
    <property type="evidence" value="ECO:0007669"/>
    <property type="project" value="UniProtKB-SubCell"/>
</dbReference>
<dbReference type="GO" id="GO:1990904">
    <property type="term" value="C:ribonucleoprotein complex"/>
    <property type="evidence" value="ECO:0007669"/>
    <property type="project" value="UniProtKB-KW"/>
</dbReference>
<dbReference type="GO" id="GO:0005840">
    <property type="term" value="C:ribosome"/>
    <property type="evidence" value="ECO:0007669"/>
    <property type="project" value="UniProtKB-KW"/>
</dbReference>
<dbReference type="GO" id="GO:0019843">
    <property type="term" value="F:rRNA binding"/>
    <property type="evidence" value="ECO:0007669"/>
    <property type="project" value="UniProtKB-UniRule"/>
</dbReference>
<dbReference type="GO" id="GO:0003735">
    <property type="term" value="F:structural constituent of ribosome"/>
    <property type="evidence" value="ECO:0007669"/>
    <property type="project" value="InterPro"/>
</dbReference>
<dbReference type="GO" id="GO:0000027">
    <property type="term" value="P:ribosomal large subunit assembly"/>
    <property type="evidence" value="ECO:0007669"/>
    <property type="project" value="UniProtKB-UniRule"/>
</dbReference>
<dbReference type="GO" id="GO:0006412">
    <property type="term" value="P:translation"/>
    <property type="evidence" value="ECO:0007669"/>
    <property type="project" value="InterPro"/>
</dbReference>
<dbReference type="CDD" id="cd07026">
    <property type="entry name" value="Ribosomal_L20"/>
    <property type="match status" value="1"/>
</dbReference>
<dbReference type="FunFam" id="1.10.1900.20:FF:000001">
    <property type="entry name" value="50S ribosomal protein L20"/>
    <property type="match status" value="1"/>
</dbReference>
<dbReference type="Gene3D" id="6.10.160.10">
    <property type="match status" value="1"/>
</dbReference>
<dbReference type="Gene3D" id="1.10.1900.20">
    <property type="entry name" value="Ribosomal protein L20"/>
    <property type="match status" value="1"/>
</dbReference>
<dbReference type="HAMAP" id="MF_00382">
    <property type="entry name" value="Ribosomal_bL20"/>
    <property type="match status" value="1"/>
</dbReference>
<dbReference type="InterPro" id="IPR005813">
    <property type="entry name" value="Ribosomal_bL20"/>
</dbReference>
<dbReference type="InterPro" id="IPR049946">
    <property type="entry name" value="RIBOSOMAL_L20_CS"/>
</dbReference>
<dbReference type="InterPro" id="IPR035566">
    <property type="entry name" value="Ribosomal_protein_bL20_C"/>
</dbReference>
<dbReference type="NCBIfam" id="TIGR01032">
    <property type="entry name" value="rplT_bact"/>
    <property type="match status" value="1"/>
</dbReference>
<dbReference type="PANTHER" id="PTHR10986">
    <property type="entry name" value="39S RIBOSOMAL PROTEIN L20"/>
    <property type="match status" value="1"/>
</dbReference>
<dbReference type="Pfam" id="PF00453">
    <property type="entry name" value="Ribosomal_L20"/>
    <property type="match status" value="1"/>
</dbReference>
<dbReference type="PRINTS" id="PR00062">
    <property type="entry name" value="RIBOSOMALL20"/>
</dbReference>
<dbReference type="SUPFAM" id="SSF74731">
    <property type="entry name" value="Ribosomal protein L20"/>
    <property type="match status" value="1"/>
</dbReference>
<dbReference type="PROSITE" id="PS00937">
    <property type="entry name" value="RIBOSOMAL_L20"/>
    <property type="match status" value="1"/>
</dbReference>
<proteinExistence type="inferred from homology"/>
<name>RK20_OENEH</name>
<feature type="chain" id="PRO_0000177299" description="Large ribosomal subunit protein bL20c">
    <location>
        <begin position="1"/>
        <end position="130"/>
    </location>
</feature>
<protein>
    <recommendedName>
        <fullName evidence="1">Large ribosomal subunit protein bL20c</fullName>
    </recommendedName>
    <alternativeName>
        <fullName evidence="2">50S ribosomal protein L20, chloroplastic</fullName>
    </alternativeName>
</protein>
<accession>Q9MTK0</accession>
<gene>
    <name evidence="1" type="primary">rpl20</name>
</gene>